<proteinExistence type="inferred from homology"/>
<feature type="chain" id="PRO_0000138733" description="Geranylgeranylglyceryl phosphate synthase">
    <location>
        <begin position="1"/>
        <end position="239"/>
    </location>
</feature>
<feature type="binding site" evidence="1">
    <location>
        <position position="19"/>
    </location>
    <ligand>
        <name>Mg(2+)</name>
        <dbReference type="ChEBI" id="CHEBI:18420"/>
    </ligand>
</feature>
<feature type="binding site" evidence="1">
    <location>
        <position position="48"/>
    </location>
    <ligand>
        <name>Mg(2+)</name>
        <dbReference type="ChEBI" id="CHEBI:18420"/>
    </ligand>
</feature>
<feature type="binding site" evidence="1">
    <location>
        <begin position="167"/>
        <end position="173"/>
    </location>
    <ligand>
        <name>sn-glycerol 1-phosphate</name>
        <dbReference type="ChEBI" id="CHEBI:57685"/>
    </ligand>
</feature>
<feature type="binding site" evidence="1">
    <location>
        <begin position="197"/>
        <end position="198"/>
    </location>
    <ligand>
        <name>sn-glycerol 1-phosphate</name>
        <dbReference type="ChEBI" id="CHEBI:57685"/>
    </ligand>
</feature>
<feature type="binding site" evidence="1">
    <location>
        <begin position="219"/>
        <end position="220"/>
    </location>
    <ligand>
        <name>sn-glycerol 1-phosphate</name>
        <dbReference type="ChEBI" id="CHEBI:57685"/>
    </ligand>
</feature>
<name>GGGPS_METKA</name>
<comment type="function">
    <text evidence="1">Prenyltransferase that catalyzes the transfer of the geranylgeranyl moiety of geranylgeranyl diphosphate (GGPP) to the C3 hydroxyl of sn-glycerol-1-phosphate (G1P). This reaction is the first ether-bond-formation step in the biosynthesis of archaeal membrane lipids.</text>
</comment>
<comment type="catalytic activity">
    <reaction evidence="1">
        <text>sn-glycerol 1-phosphate + (2E,6E,10E)-geranylgeranyl diphosphate = sn-3-O-(geranylgeranyl)glycerol 1-phosphate + diphosphate</text>
        <dbReference type="Rhea" id="RHEA:23404"/>
        <dbReference type="ChEBI" id="CHEBI:33019"/>
        <dbReference type="ChEBI" id="CHEBI:57677"/>
        <dbReference type="ChEBI" id="CHEBI:57685"/>
        <dbReference type="ChEBI" id="CHEBI:58756"/>
        <dbReference type="EC" id="2.5.1.41"/>
    </reaction>
</comment>
<comment type="cofactor">
    <cofactor evidence="1">
        <name>Mg(2+)</name>
        <dbReference type="ChEBI" id="CHEBI:18420"/>
    </cofactor>
</comment>
<comment type="pathway">
    <text evidence="1">Membrane lipid metabolism; glycerophospholipid metabolism.</text>
</comment>
<comment type="subcellular location">
    <subcellularLocation>
        <location evidence="1">Cytoplasm</location>
    </subcellularLocation>
</comment>
<comment type="similarity">
    <text evidence="1">Belongs to the GGGP/HepGP synthase family. Group II subfamily.</text>
</comment>
<organism>
    <name type="scientific">Methanopyrus kandleri (strain AV19 / DSM 6324 / JCM 9639 / NBRC 100938)</name>
    <dbReference type="NCBI Taxonomy" id="190192"/>
    <lineage>
        <taxon>Archaea</taxon>
        <taxon>Methanobacteriati</taxon>
        <taxon>Methanobacteriota</taxon>
        <taxon>Methanomada group</taxon>
        <taxon>Methanopyri</taxon>
        <taxon>Methanopyrales</taxon>
        <taxon>Methanopyraceae</taxon>
        <taxon>Methanopyrus</taxon>
    </lineage>
</organism>
<reference key="1">
    <citation type="journal article" date="2002" name="Proc. Natl. Acad. Sci. U.S.A.">
        <title>The complete genome of hyperthermophile Methanopyrus kandleri AV19 and monophyly of archaeal methanogens.</title>
        <authorList>
            <person name="Slesarev A.I."/>
            <person name="Mezhevaya K.V."/>
            <person name="Makarova K.S."/>
            <person name="Polushin N.N."/>
            <person name="Shcherbinina O.V."/>
            <person name="Shakhova V.V."/>
            <person name="Belova G.I."/>
            <person name="Aravind L."/>
            <person name="Natale D.A."/>
            <person name="Rogozin I.B."/>
            <person name="Tatusov R.L."/>
            <person name="Wolf Y.I."/>
            <person name="Stetter K.O."/>
            <person name="Malykh A.G."/>
            <person name="Koonin E.V."/>
            <person name="Kozyavkin S.A."/>
        </authorList>
    </citation>
    <scope>NUCLEOTIDE SEQUENCE [LARGE SCALE GENOMIC DNA]</scope>
    <source>
        <strain>AV19 / DSM 6324 / JCM 9639 / NBRC 100938</strain>
    </source>
</reference>
<dbReference type="EC" id="2.5.1.41" evidence="1"/>
<dbReference type="EMBL" id="AE009439">
    <property type="protein sequence ID" value="AAM01857.1"/>
    <property type="molecule type" value="Genomic_DNA"/>
</dbReference>
<dbReference type="RefSeq" id="WP_011019012.1">
    <property type="nucleotide sequence ID" value="NC_003551.1"/>
</dbReference>
<dbReference type="SMR" id="Q8TXM0"/>
<dbReference type="FunCoup" id="Q8TXM0">
    <property type="interactions" value="1"/>
</dbReference>
<dbReference type="STRING" id="190192.MK0642"/>
<dbReference type="PaxDb" id="190192-MK0642"/>
<dbReference type="EnsemblBacteria" id="AAM01857">
    <property type="protein sequence ID" value="AAM01857"/>
    <property type="gene ID" value="MK0642"/>
</dbReference>
<dbReference type="GeneID" id="1476743"/>
<dbReference type="KEGG" id="mka:MK0642"/>
<dbReference type="PATRIC" id="fig|190192.8.peg.681"/>
<dbReference type="HOGENOM" id="CLU_068610_0_0_2"/>
<dbReference type="InParanoid" id="Q8TXM0"/>
<dbReference type="OrthoDB" id="7409at2157"/>
<dbReference type="UniPathway" id="UPA00940"/>
<dbReference type="Proteomes" id="UP000001826">
    <property type="component" value="Chromosome"/>
</dbReference>
<dbReference type="GO" id="GO:0005737">
    <property type="term" value="C:cytoplasm"/>
    <property type="evidence" value="ECO:0007669"/>
    <property type="project" value="UniProtKB-SubCell"/>
</dbReference>
<dbReference type="GO" id="GO:0000287">
    <property type="term" value="F:magnesium ion binding"/>
    <property type="evidence" value="ECO:0007669"/>
    <property type="project" value="UniProtKB-UniRule"/>
</dbReference>
<dbReference type="GO" id="GO:0047294">
    <property type="term" value="F:phosphoglycerol geranylgeranyltransferase activity"/>
    <property type="evidence" value="ECO:0007669"/>
    <property type="project" value="UniProtKB-UniRule"/>
</dbReference>
<dbReference type="GO" id="GO:0046474">
    <property type="term" value="P:glycerophospholipid biosynthetic process"/>
    <property type="evidence" value="ECO:0007669"/>
    <property type="project" value="UniProtKB-UniRule"/>
</dbReference>
<dbReference type="CDD" id="cd02812">
    <property type="entry name" value="PcrB_like"/>
    <property type="match status" value="1"/>
</dbReference>
<dbReference type="FunFam" id="3.20.20.390:FF:000001">
    <property type="entry name" value="Heptaprenylglyceryl phosphate synthase"/>
    <property type="match status" value="1"/>
</dbReference>
<dbReference type="Gene3D" id="3.20.20.390">
    <property type="entry name" value="FMN-linked oxidoreductases"/>
    <property type="match status" value="1"/>
</dbReference>
<dbReference type="HAMAP" id="MF_00112">
    <property type="entry name" value="GGGP_HepGP_synthase"/>
    <property type="match status" value="1"/>
</dbReference>
<dbReference type="InterPro" id="IPR039074">
    <property type="entry name" value="GGGP/HepGP_synthase_I"/>
</dbReference>
<dbReference type="InterPro" id="IPR038597">
    <property type="entry name" value="GGGP/HepGP_synthase_sf"/>
</dbReference>
<dbReference type="InterPro" id="IPR008205">
    <property type="entry name" value="GGGP_HepGP_synthase"/>
</dbReference>
<dbReference type="InterPro" id="IPR010946">
    <property type="entry name" value="GGGP_synth"/>
</dbReference>
<dbReference type="NCBIfam" id="TIGR01769">
    <property type="entry name" value="GGGP"/>
    <property type="match status" value="1"/>
</dbReference>
<dbReference type="NCBIfam" id="TIGR01768">
    <property type="entry name" value="GGGP-family"/>
    <property type="match status" value="1"/>
</dbReference>
<dbReference type="NCBIfam" id="NF003198">
    <property type="entry name" value="PRK04169.1-2"/>
    <property type="match status" value="1"/>
</dbReference>
<dbReference type="PANTHER" id="PTHR40029">
    <property type="match status" value="1"/>
</dbReference>
<dbReference type="PANTHER" id="PTHR40029:SF2">
    <property type="entry name" value="HEPTAPRENYLGLYCERYL PHOSPHATE SYNTHASE"/>
    <property type="match status" value="1"/>
</dbReference>
<dbReference type="Pfam" id="PF01884">
    <property type="entry name" value="PcrB"/>
    <property type="match status" value="1"/>
</dbReference>
<dbReference type="SUPFAM" id="SSF51395">
    <property type="entry name" value="FMN-linked oxidoreductases"/>
    <property type="match status" value="1"/>
</dbReference>
<accession>Q8TXM0</accession>
<evidence type="ECO:0000255" key="1">
    <source>
        <dbReference type="HAMAP-Rule" id="MF_00112"/>
    </source>
</evidence>
<keyword id="KW-0963">Cytoplasm</keyword>
<keyword id="KW-0444">Lipid biosynthesis</keyword>
<keyword id="KW-0443">Lipid metabolism</keyword>
<keyword id="KW-0460">Magnesium</keyword>
<keyword id="KW-0479">Metal-binding</keyword>
<keyword id="KW-0594">Phospholipid biosynthesis</keyword>
<keyword id="KW-1208">Phospholipid metabolism</keyword>
<keyword id="KW-1185">Reference proteome</keyword>
<keyword id="KW-0808">Transferase</keyword>
<protein>
    <recommendedName>
        <fullName evidence="1">Geranylgeranylglyceryl phosphate synthase</fullName>
        <shortName evidence="1">GGGP synthase</shortName>
        <shortName evidence="1">GGGPS</shortName>
        <ecNumber evidence="1">2.5.1.41</ecNumber>
    </recommendedName>
    <alternativeName>
        <fullName evidence="1">(S)-3-O-geranylgeranylglyceryl phosphate synthase</fullName>
    </alternativeName>
    <alternativeName>
        <fullName evidence="1">Phosphoglycerol geranylgeranyltransferase</fullName>
    </alternativeName>
</protein>
<gene>
    <name type="ordered locus">MK0642</name>
</gene>
<sequence length="239" mass="25052">MGVFGYLRERTPCHLTLLDPVDVGPEEVPEVLESLVKAGTDAVMVGGSTAHASQVEAVVEAIREVADVPVILFPNGPEGLAPNADAVLFMSLLNSRNTYYLIEAQVKGAPLVERFGLESIPTGYLIVGEWGTTVSVVGDARVIPFDRVEVIVAYALAAKHLGMKAVYLEAGSGAPEPVPPEVVRRVSGIGVFTIVGGGIRSPETARELAEAGADAIVTGTAVERDPDLAAEIVEAIKDL</sequence>